<name>APX1_ORYSI</name>
<sequence length="250" mass="27103">MAKNYPVVSAEYQEAVEKARQKLRALIAEKSCAPLMLRLAWHSAGTFDVSSKTGGPFGTMKTPAELSHAANAGLDIAVRMLEPIKEEIPTISYADFYQLAGVVAVEVSGGPAVPFHPGREDKPAPPPEGRLPDATKGSDHLRQVFGAQMGLSDQDIVALSGGHTLGRCHKERSGFEGPWTRNPLQFDNSYFTELLSGDKEGLLQLPSDKALLSDPAFCPLVEKYAADEKAFFEDYKEAHLKLSELGFADA</sequence>
<comment type="function">
    <text evidence="1">Plays a key role in hydrogen peroxide removal.</text>
</comment>
<comment type="catalytic activity">
    <reaction>
        <text>L-ascorbate + H2O2 = L-dehydroascorbate + 2 H2O</text>
        <dbReference type="Rhea" id="RHEA:22996"/>
        <dbReference type="ChEBI" id="CHEBI:15377"/>
        <dbReference type="ChEBI" id="CHEBI:16240"/>
        <dbReference type="ChEBI" id="CHEBI:38290"/>
        <dbReference type="ChEBI" id="CHEBI:58539"/>
        <dbReference type="EC" id="1.11.1.11"/>
    </reaction>
</comment>
<comment type="cofactor">
    <cofactor evidence="1">
        <name>heme b</name>
        <dbReference type="ChEBI" id="CHEBI:60344"/>
    </cofactor>
    <text evidence="1">Binds 1 heme b (iron(II)-protoporphyrin IX) group.</text>
</comment>
<comment type="subcellular location">
    <subcellularLocation>
        <location evidence="6">Cytoplasm</location>
    </subcellularLocation>
</comment>
<comment type="induction">
    <text evidence="5">By salt stress and hydrogen peroxide.</text>
</comment>
<comment type="miscellaneous">
    <text evidence="1">Binds one cation per subunit; probably K(+), but might also be Ca(2+).</text>
</comment>
<comment type="similarity">
    <text evidence="6">Belongs to the peroxidase family. Ascorbate peroxidase subfamily.</text>
</comment>
<accession>A2XFC7</accession>
<accession>P93404</accession>
<accession>Q84QS3</accession>
<accession>Q8GZZ2</accession>
<proteinExistence type="evidence at transcript level"/>
<organism>
    <name type="scientific">Oryza sativa subsp. indica</name>
    <name type="common">Rice</name>
    <dbReference type="NCBI Taxonomy" id="39946"/>
    <lineage>
        <taxon>Eukaryota</taxon>
        <taxon>Viridiplantae</taxon>
        <taxon>Streptophyta</taxon>
        <taxon>Embryophyta</taxon>
        <taxon>Tracheophyta</taxon>
        <taxon>Spermatophyta</taxon>
        <taxon>Magnoliopsida</taxon>
        <taxon>Liliopsida</taxon>
        <taxon>Poales</taxon>
        <taxon>Poaceae</taxon>
        <taxon>BOP clade</taxon>
        <taxon>Oryzoideae</taxon>
        <taxon>Oryzeae</taxon>
        <taxon>Oryzinae</taxon>
        <taxon>Oryza</taxon>
        <taxon>Oryza sativa</taxon>
    </lineage>
</organism>
<gene>
    <name type="primary">APX1</name>
    <name type="ORF">OsI_010770</name>
</gene>
<protein>
    <recommendedName>
        <fullName>L-ascorbate peroxidase 1, cytosolic</fullName>
        <shortName>APXa</shortName>
        <ecNumber>1.11.1.11</ecNumber>
    </recommendedName>
    <alternativeName>
        <fullName>OsAPx01</fullName>
    </alternativeName>
</protein>
<feature type="initiator methionine" description="Removed" evidence="1">
    <location>
        <position position="1"/>
    </location>
</feature>
<feature type="chain" id="PRO_0000300257" description="L-ascorbate peroxidase 1, cytosolic">
    <location>
        <begin position="2"/>
        <end position="250"/>
    </location>
</feature>
<feature type="region of interest" description="Disordered" evidence="4">
    <location>
        <begin position="113"/>
        <end position="137"/>
    </location>
</feature>
<feature type="active site" description="Proton acceptor" evidence="2 3">
    <location>
        <position position="42"/>
    </location>
</feature>
<feature type="binding site" description="axial binding residue" evidence="2">
    <location>
        <position position="163"/>
    </location>
    <ligand>
        <name>heme b</name>
        <dbReference type="ChEBI" id="CHEBI:60344"/>
    </ligand>
    <ligandPart>
        <name>Fe</name>
        <dbReference type="ChEBI" id="CHEBI:18248"/>
    </ligandPart>
</feature>
<feature type="binding site" evidence="1">
    <location>
        <position position="164"/>
    </location>
    <ligand>
        <name>K(+)</name>
        <dbReference type="ChEBI" id="CHEBI:29103"/>
    </ligand>
</feature>
<feature type="binding site" evidence="1">
    <location>
        <position position="180"/>
    </location>
    <ligand>
        <name>K(+)</name>
        <dbReference type="ChEBI" id="CHEBI:29103"/>
    </ligand>
</feature>
<feature type="binding site" evidence="1">
    <location>
        <position position="182"/>
    </location>
    <ligand>
        <name>K(+)</name>
        <dbReference type="ChEBI" id="CHEBI:29103"/>
    </ligand>
</feature>
<feature type="binding site" evidence="1">
    <location>
        <position position="187"/>
    </location>
    <ligand>
        <name>K(+)</name>
        <dbReference type="ChEBI" id="CHEBI:29103"/>
    </ligand>
</feature>
<feature type="site" description="Transition state stabilizer" evidence="2">
    <location>
        <position position="38"/>
    </location>
</feature>
<feature type="sequence conflict" description="In Ref. 1; AAP13093." evidence="6" ref="1">
    <original>C</original>
    <variation>R</variation>
    <location>
        <position position="218"/>
    </location>
</feature>
<keyword id="KW-0106">Calcium</keyword>
<keyword id="KW-0963">Cytoplasm</keyword>
<keyword id="KW-0349">Heme</keyword>
<keyword id="KW-0376">Hydrogen peroxide</keyword>
<keyword id="KW-0408">Iron</keyword>
<keyword id="KW-0479">Metal-binding</keyword>
<keyword id="KW-0560">Oxidoreductase</keyword>
<keyword id="KW-0575">Peroxidase</keyword>
<keyword id="KW-0630">Potassium</keyword>
<keyword id="KW-1185">Reference proteome</keyword>
<keyword id="KW-0346">Stress response</keyword>
<dbReference type="EC" id="1.11.1.11"/>
<dbReference type="EMBL" id="AY254495">
    <property type="protein sequence ID" value="AAP13093.1"/>
    <property type="molecule type" value="mRNA"/>
</dbReference>
<dbReference type="EMBL" id="CM000128">
    <property type="protein sequence ID" value="EAY89537.1"/>
    <property type="molecule type" value="Genomic_DNA"/>
</dbReference>
<dbReference type="SMR" id="A2XFC7"/>
<dbReference type="STRING" id="39946.A2XFC7"/>
<dbReference type="EnsemblPlants" id="BGIOSGA012372-TA">
    <property type="protein sequence ID" value="BGIOSGA012372-PA"/>
    <property type="gene ID" value="BGIOSGA012372"/>
</dbReference>
<dbReference type="Gramene" id="BGIOSGA012372-TA">
    <property type="protein sequence ID" value="BGIOSGA012372-PA"/>
    <property type="gene ID" value="BGIOSGA012372"/>
</dbReference>
<dbReference type="HOGENOM" id="CLU_036959_3_0_1"/>
<dbReference type="OMA" id="MAKNYPV"/>
<dbReference type="Proteomes" id="UP000007015">
    <property type="component" value="Chromosome 3"/>
</dbReference>
<dbReference type="GO" id="GO:0009507">
    <property type="term" value="C:chloroplast"/>
    <property type="evidence" value="ECO:0007669"/>
    <property type="project" value="TreeGrafter"/>
</dbReference>
<dbReference type="GO" id="GO:0020037">
    <property type="term" value="F:heme binding"/>
    <property type="evidence" value="ECO:0007669"/>
    <property type="project" value="InterPro"/>
</dbReference>
<dbReference type="GO" id="GO:0016688">
    <property type="term" value="F:L-ascorbate peroxidase activity"/>
    <property type="evidence" value="ECO:0007669"/>
    <property type="project" value="UniProtKB-EC"/>
</dbReference>
<dbReference type="GO" id="GO:0046872">
    <property type="term" value="F:metal ion binding"/>
    <property type="evidence" value="ECO:0007669"/>
    <property type="project" value="UniProtKB-KW"/>
</dbReference>
<dbReference type="GO" id="GO:0034599">
    <property type="term" value="P:cellular response to oxidative stress"/>
    <property type="evidence" value="ECO:0007669"/>
    <property type="project" value="InterPro"/>
</dbReference>
<dbReference type="GO" id="GO:0042744">
    <property type="term" value="P:hydrogen peroxide catabolic process"/>
    <property type="evidence" value="ECO:0007669"/>
    <property type="project" value="UniProtKB-KW"/>
</dbReference>
<dbReference type="GO" id="GO:0000302">
    <property type="term" value="P:response to reactive oxygen species"/>
    <property type="evidence" value="ECO:0007669"/>
    <property type="project" value="TreeGrafter"/>
</dbReference>
<dbReference type="CDD" id="cd00691">
    <property type="entry name" value="ascorbate_peroxidase"/>
    <property type="match status" value="1"/>
</dbReference>
<dbReference type="FunFam" id="1.10.520.10:FF:000003">
    <property type="entry name" value="Cytosolic ascorbate peroxidase"/>
    <property type="match status" value="1"/>
</dbReference>
<dbReference type="FunFam" id="1.10.420.10:FF:000003">
    <property type="entry name" value="L-ascorbate peroxidase, cytosolic"/>
    <property type="match status" value="1"/>
</dbReference>
<dbReference type="Gene3D" id="1.10.520.10">
    <property type="match status" value="1"/>
</dbReference>
<dbReference type="Gene3D" id="1.10.420.10">
    <property type="entry name" value="Peroxidase, domain 2"/>
    <property type="match status" value="1"/>
</dbReference>
<dbReference type="InterPro" id="IPR044831">
    <property type="entry name" value="Ccp1-like"/>
</dbReference>
<dbReference type="InterPro" id="IPR002016">
    <property type="entry name" value="Haem_peroxidase"/>
</dbReference>
<dbReference type="InterPro" id="IPR010255">
    <property type="entry name" value="Haem_peroxidase_sf"/>
</dbReference>
<dbReference type="InterPro" id="IPR002207">
    <property type="entry name" value="Peroxidase_I"/>
</dbReference>
<dbReference type="InterPro" id="IPR019794">
    <property type="entry name" value="Peroxidases_AS"/>
</dbReference>
<dbReference type="InterPro" id="IPR019793">
    <property type="entry name" value="Peroxidases_heam-ligand_BS"/>
</dbReference>
<dbReference type="PANTHER" id="PTHR31356:SF57">
    <property type="entry name" value="L-ASCORBATE PEROXIDASE 1, CYTOSOLIC"/>
    <property type="match status" value="1"/>
</dbReference>
<dbReference type="PANTHER" id="PTHR31356">
    <property type="entry name" value="THYLAKOID LUMENAL 29 KDA PROTEIN, CHLOROPLASTIC-RELATED"/>
    <property type="match status" value="1"/>
</dbReference>
<dbReference type="Pfam" id="PF00141">
    <property type="entry name" value="peroxidase"/>
    <property type="match status" value="1"/>
</dbReference>
<dbReference type="PRINTS" id="PR00459">
    <property type="entry name" value="ASPEROXIDASE"/>
</dbReference>
<dbReference type="PRINTS" id="PR00458">
    <property type="entry name" value="PEROXIDASE"/>
</dbReference>
<dbReference type="SUPFAM" id="SSF48113">
    <property type="entry name" value="Heme-dependent peroxidases"/>
    <property type="match status" value="1"/>
</dbReference>
<dbReference type="PROSITE" id="PS00435">
    <property type="entry name" value="PEROXIDASE_1"/>
    <property type="match status" value="1"/>
</dbReference>
<dbReference type="PROSITE" id="PS00436">
    <property type="entry name" value="PEROXIDASE_2"/>
    <property type="match status" value="1"/>
</dbReference>
<dbReference type="PROSITE" id="PS50873">
    <property type="entry name" value="PEROXIDASE_4"/>
    <property type="match status" value="1"/>
</dbReference>
<reference key="1">
    <citation type="submission" date="2003-03" db="EMBL/GenBank/DDBJ databases">
        <title>Cloning of ascorbate peroxidase gene from indica rice, Khao Dawk Mali 105.</title>
        <authorList>
            <person name="Duriyapong F."/>
            <person name="Peyachoknagul S."/>
            <person name="Apisitwanich S."/>
        </authorList>
    </citation>
    <scope>NUCLEOTIDE SEQUENCE [MRNA]</scope>
    <source>
        <strain>cv. Khao Dawk Mali 105</strain>
    </source>
</reference>
<reference key="2">
    <citation type="journal article" date="2005" name="PLoS Biol.">
        <title>The genomes of Oryza sativa: a history of duplications.</title>
        <authorList>
            <person name="Yu J."/>
            <person name="Wang J."/>
            <person name="Lin W."/>
            <person name="Li S."/>
            <person name="Li H."/>
            <person name="Zhou J."/>
            <person name="Ni P."/>
            <person name="Dong W."/>
            <person name="Hu S."/>
            <person name="Zeng C."/>
            <person name="Zhang J."/>
            <person name="Zhang Y."/>
            <person name="Li R."/>
            <person name="Xu Z."/>
            <person name="Li S."/>
            <person name="Li X."/>
            <person name="Zheng H."/>
            <person name="Cong L."/>
            <person name="Lin L."/>
            <person name="Yin J."/>
            <person name="Geng J."/>
            <person name="Li G."/>
            <person name="Shi J."/>
            <person name="Liu J."/>
            <person name="Lv H."/>
            <person name="Li J."/>
            <person name="Wang J."/>
            <person name="Deng Y."/>
            <person name="Ran L."/>
            <person name="Shi X."/>
            <person name="Wang X."/>
            <person name="Wu Q."/>
            <person name="Li C."/>
            <person name="Ren X."/>
            <person name="Wang J."/>
            <person name="Wang X."/>
            <person name="Li D."/>
            <person name="Liu D."/>
            <person name="Zhang X."/>
            <person name="Ji Z."/>
            <person name="Zhao W."/>
            <person name="Sun Y."/>
            <person name="Zhang Z."/>
            <person name="Bao J."/>
            <person name="Han Y."/>
            <person name="Dong L."/>
            <person name="Ji J."/>
            <person name="Chen P."/>
            <person name="Wu S."/>
            <person name="Liu J."/>
            <person name="Xiao Y."/>
            <person name="Bu D."/>
            <person name="Tan J."/>
            <person name="Yang L."/>
            <person name="Ye C."/>
            <person name="Zhang J."/>
            <person name="Xu J."/>
            <person name="Zhou Y."/>
            <person name="Yu Y."/>
            <person name="Zhang B."/>
            <person name="Zhuang S."/>
            <person name="Wei H."/>
            <person name="Liu B."/>
            <person name="Lei M."/>
            <person name="Yu H."/>
            <person name="Li Y."/>
            <person name="Xu H."/>
            <person name="Wei S."/>
            <person name="He X."/>
            <person name="Fang L."/>
            <person name="Zhang Z."/>
            <person name="Zhang Y."/>
            <person name="Huang X."/>
            <person name="Su Z."/>
            <person name="Tong W."/>
            <person name="Li J."/>
            <person name="Tong Z."/>
            <person name="Li S."/>
            <person name="Ye J."/>
            <person name="Wang L."/>
            <person name="Fang L."/>
            <person name="Lei T."/>
            <person name="Chen C.-S."/>
            <person name="Chen H.-C."/>
            <person name="Xu Z."/>
            <person name="Li H."/>
            <person name="Huang H."/>
            <person name="Zhang F."/>
            <person name="Xu H."/>
            <person name="Li N."/>
            <person name="Zhao C."/>
            <person name="Li S."/>
            <person name="Dong L."/>
            <person name="Huang Y."/>
            <person name="Li L."/>
            <person name="Xi Y."/>
            <person name="Qi Q."/>
            <person name="Li W."/>
            <person name="Zhang B."/>
            <person name="Hu W."/>
            <person name="Zhang Y."/>
            <person name="Tian X."/>
            <person name="Jiao Y."/>
            <person name="Liang X."/>
            <person name="Jin J."/>
            <person name="Gao L."/>
            <person name="Zheng W."/>
            <person name="Hao B."/>
            <person name="Liu S.-M."/>
            <person name="Wang W."/>
            <person name="Yuan L."/>
            <person name="Cao M."/>
            <person name="McDermott J."/>
            <person name="Samudrala R."/>
            <person name="Wang J."/>
            <person name="Wong G.K.-S."/>
            <person name="Yang H."/>
        </authorList>
    </citation>
    <scope>NUCLEOTIDE SEQUENCE [LARGE SCALE GENOMIC DNA]</scope>
    <source>
        <strain>cv. 93-11</strain>
    </source>
</reference>
<reference key="3">
    <citation type="journal article" date="2004" name="J. Mol. Evol.">
        <title>Analysis of the molecular evolutionary history of the ascorbate peroxidase gene family: inferences from the rice genome.</title>
        <authorList>
            <person name="Teixeira F.K."/>
            <person name="Menezes-Benavente L."/>
            <person name="Margis R."/>
            <person name="Margis-Pinheiro M."/>
        </authorList>
    </citation>
    <scope>NOMENCLATURE</scope>
</reference>
<reference key="4">
    <citation type="journal article" date="2005" name="J. Plant Physiol.">
        <title>Expression of ascorbate peroxidase and glutathione reductase in roots of rice seedlings in response to NaCl and H2O2.</title>
        <authorList>
            <person name="Tsai Y.-C."/>
            <person name="Hong C.-Y."/>
            <person name="Liu L.-F."/>
            <person name="Kao C.H."/>
        </authorList>
    </citation>
    <scope>INDUCTION</scope>
</reference>
<evidence type="ECO:0000250" key="1"/>
<evidence type="ECO:0000255" key="2">
    <source>
        <dbReference type="PROSITE-ProRule" id="PRU00297"/>
    </source>
</evidence>
<evidence type="ECO:0000255" key="3">
    <source>
        <dbReference type="PROSITE-ProRule" id="PRU10012"/>
    </source>
</evidence>
<evidence type="ECO:0000256" key="4">
    <source>
        <dbReference type="SAM" id="MobiDB-lite"/>
    </source>
</evidence>
<evidence type="ECO:0000269" key="5">
    <source>
    </source>
</evidence>
<evidence type="ECO:0000305" key="6"/>